<gene>
    <name evidence="1" type="primary">dapA</name>
    <name type="ordered locus">Mpe_A2563</name>
</gene>
<accession>A2SIX7</accession>
<protein>
    <recommendedName>
        <fullName evidence="1">4-hydroxy-tetrahydrodipicolinate synthase</fullName>
        <shortName evidence="1">HTPA synthase</shortName>
        <ecNumber evidence="1">4.3.3.7</ecNumber>
    </recommendedName>
</protein>
<feature type="chain" id="PRO_1000050221" description="4-hydroxy-tetrahydrodipicolinate synthase">
    <location>
        <begin position="1"/>
        <end position="293"/>
    </location>
</feature>
<feature type="active site" description="Proton donor/acceptor" evidence="1">
    <location>
        <position position="135"/>
    </location>
</feature>
<feature type="active site" description="Schiff-base intermediate with substrate" evidence="1">
    <location>
        <position position="163"/>
    </location>
</feature>
<feature type="binding site" evidence="1">
    <location>
        <position position="47"/>
    </location>
    <ligand>
        <name>pyruvate</name>
        <dbReference type="ChEBI" id="CHEBI:15361"/>
    </ligand>
</feature>
<feature type="binding site" evidence="1">
    <location>
        <position position="205"/>
    </location>
    <ligand>
        <name>pyruvate</name>
        <dbReference type="ChEBI" id="CHEBI:15361"/>
    </ligand>
</feature>
<feature type="site" description="Part of a proton relay during catalysis" evidence="1">
    <location>
        <position position="46"/>
    </location>
</feature>
<feature type="site" description="Part of a proton relay during catalysis" evidence="1">
    <location>
        <position position="109"/>
    </location>
</feature>
<comment type="function">
    <text evidence="1">Catalyzes the condensation of (S)-aspartate-beta-semialdehyde [(S)-ASA] and pyruvate to 4-hydroxy-tetrahydrodipicolinate (HTPA).</text>
</comment>
<comment type="catalytic activity">
    <reaction evidence="1">
        <text>L-aspartate 4-semialdehyde + pyruvate = (2S,4S)-4-hydroxy-2,3,4,5-tetrahydrodipicolinate + H2O + H(+)</text>
        <dbReference type="Rhea" id="RHEA:34171"/>
        <dbReference type="ChEBI" id="CHEBI:15361"/>
        <dbReference type="ChEBI" id="CHEBI:15377"/>
        <dbReference type="ChEBI" id="CHEBI:15378"/>
        <dbReference type="ChEBI" id="CHEBI:67139"/>
        <dbReference type="ChEBI" id="CHEBI:537519"/>
        <dbReference type="EC" id="4.3.3.7"/>
    </reaction>
</comment>
<comment type="pathway">
    <text evidence="1">Amino-acid biosynthesis; L-lysine biosynthesis via DAP pathway; (S)-tetrahydrodipicolinate from L-aspartate: step 3/4.</text>
</comment>
<comment type="subunit">
    <text evidence="1">Homotetramer; dimer of dimers.</text>
</comment>
<comment type="subcellular location">
    <subcellularLocation>
        <location evidence="1">Cytoplasm</location>
    </subcellularLocation>
</comment>
<comment type="similarity">
    <text evidence="1">Belongs to the DapA family.</text>
</comment>
<comment type="caution">
    <text evidence="2">Was originally thought to be a dihydrodipicolinate synthase (DHDPS), catalyzing the condensation of (S)-aspartate-beta-semialdehyde [(S)-ASA] and pyruvate to dihydrodipicolinate (DHDP). However, it was shown in E.coli that the product of the enzymatic reaction is not dihydrodipicolinate but in fact (4S)-4-hydroxy-2,3,4,5-tetrahydro-(2S)-dipicolinic acid (HTPA), and that the consecutive dehydration reaction leading to DHDP is not spontaneous but catalyzed by DapB.</text>
</comment>
<dbReference type="EC" id="4.3.3.7" evidence="1"/>
<dbReference type="EMBL" id="CP000555">
    <property type="protein sequence ID" value="ABM95516.1"/>
    <property type="molecule type" value="Genomic_DNA"/>
</dbReference>
<dbReference type="RefSeq" id="WP_011830148.1">
    <property type="nucleotide sequence ID" value="NC_008825.1"/>
</dbReference>
<dbReference type="SMR" id="A2SIX7"/>
<dbReference type="STRING" id="420662.Mpe_A2563"/>
<dbReference type="KEGG" id="mpt:Mpe_A2563"/>
<dbReference type="eggNOG" id="COG0329">
    <property type="taxonomic scope" value="Bacteria"/>
</dbReference>
<dbReference type="HOGENOM" id="CLU_049343_7_1_4"/>
<dbReference type="UniPathway" id="UPA00034">
    <property type="reaction ID" value="UER00017"/>
</dbReference>
<dbReference type="Proteomes" id="UP000000366">
    <property type="component" value="Chromosome"/>
</dbReference>
<dbReference type="GO" id="GO:0005829">
    <property type="term" value="C:cytosol"/>
    <property type="evidence" value="ECO:0007669"/>
    <property type="project" value="TreeGrafter"/>
</dbReference>
<dbReference type="GO" id="GO:0008840">
    <property type="term" value="F:4-hydroxy-tetrahydrodipicolinate synthase activity"/>
    <property type="evidence" value="ECO:0007669"/>
    <property type="project" value="UniProtKB-UniRule"/>
</dbReference>
<dbReference type="GO" id="GO:0019877">
    <property type="term" value="P:diaminopimelate biosynthetic process"/>
    <property type="evidence" value="ECO:0007669"/>
    <property type="project" value="UniProtKB-UniRule"/>
</dbReference>
<dbReference type="GO" id="GO:0009089">
    <property type="term" value="P:lysine biosynthetic process via diaminopimelate"/>
    <property type="evidence" value="ECO:0007669"/>
    <property type="project" value="UniProtKB-UniRule"/>
</dbReference>
<dbReference type="CDD" id="cd00950">
    <property type="entry name" value="DHDPS"/>
    <property type="match status" value="1"/>
</dbReference>
<dbReference type="Gene3D" id="3.20.20.70">
    <property type="entry name" value="Aldolase class I"/>
    <property type="match status" value="1"/>
</dbReference>
<dbReference type="HAMAP" id="MF_00418">
    <property type="entry name" value="DapA"/>
    <property type="match status" value="1"/>
</dbReference>
<dbReference type="InterPro" id="IPR013785">
    <property type="entry name" value="Aldolase_TIM"/>
</dbReference>
<dbReference type="InterPro" id="IPR005263">
    <property type="entry name" value="DapA"/>
</dbReference>
<dbReference type="InterPro" id="IPR002220">
    <property type="entry name" value="DapA-like"/>
</dbReference>
<dbReference type="InterPro" id="IPR020625">
    <property type="entry name" value="Schiff_base-form_aldolases_AS"/>
</dbReference>
<dbReference type="NCBIfam" id="TIGR00674">
    <property type="entry name" value="dapA"/>
    <property type="match status" value="1"/>
</dbReference>
<dbReference type="PANTHER" id="PTHR12128:SF66">
    <property type="entry name" value="4-HYDROXY-2-OXOGLUTARATE ALDOLASE, MITOCHONDRIAL"/>
    <property type="match status" value="1"/>
</dbReference>
<dbReference type="PANTHER" id="PTHR12128">
    <property type="entry name" value="DIHYDRODIPICOLINATE SYNTHASE"/>
    <property type="match status" value="1"/>
</dbReference>
<dbReference type="Pfam" id="PF00701">
    <property type="entry name" value="DHDPS"/>
    <property type="match status" value="1"/>
</dbReference>
<dbReference type="PIRSF" id="PIRSF001365">
    <property type="entry name" value="DHDPS"/>
    <property type="match status" value="1"/>
</dbReference>
<dbReference type="PRINTS" id="PR00146">
    <property type="entry name" value="DHPICSNTHASE"/>
</dbReference>
<dbReference type="SMART" id="SM01130">
    <property type="entry name" value="DHDPS"/>
    <property type="match status" value="1"/>
</dbReference>
<dbReference type="SUPFAM" id="SSF51569">
    <property type="entry name" value="Aldolase"/>
    <property type="match status" value="1"/>
</dbReference>
<dbReference type="PROSITE" id="PS00666">
    <property type="entry name" value="DHDPS_2"/>
    <property type="match status" value="1"/>
</dbReference>
<sequence>MKPIVGSIVALVTPMHEDGSVDYPSLRRLIDWHIAEGTDCIGVVGTTGESPTVAPEEHCEIIRVAVEHVAGRVPVMAGAGANSTREAIELSRYAKQVGADCTLQVVPYYNKPTQEGQYQHFRSIAEAVDIPVVLYNVPGRTVADMLPETVLRLAQVPGIVGLKEATGNIERACWLIKQAPKGFSIYSGDDPTAVALMLLGGHGNVSVTANVAPRAMHELCVAAMAGDAKRAAKIHLALLPLHKQLFCEPNPIPVKWALQRMGRCGGALRLPLTPLSAALQPVVEQSLRDAGLL</sequence>
<keyword id="KW-0028">Amino-acid biosynthesis</keyword>
<keyword id="KW-0963">Cytoplasm</keyword>
<keyword id="KW-0220">Diaminopimelate biosynthesis</keyword>
<keyword id="KW-0456">Lyase</keyword>
<keyword id="KW-0457">Lysine biosynthesis</keyword>
<keyword id="KW-1185">Reference proteome</keyword>
<keyword id="KW-0704">Schiff base</keyword>
<reference key="1">
    <citation type="journal article" date="2007" name="J. Bacteriol.">
        <title>Whole-genome analysis of the methyl tert-butyl ether-degrading beta-proteobacterium Methylibium petroleiphilum PM1.</title>
        <authorList>
            <person name="Kane S.R."/>
            <person name="Chakicherla A.Y."/>
            <person name="Chain P.S.G."/>
            <person name="Schmidt R."/>
            <person name="Shin M.W."/>
            <person name="Legler T.C."/>
            <person name="Scow K.M."/>
            <person name="Larimer F.W."/>
            <person name="Lucas S.M."/>
            <person name="Richardson P.M."/>
            <person name="Hristova K.R."/>
        </authorList>
    </citation>
    <scope>NUCLEOTIDE SEQUENCE [LARGE SCALE GENOMIC DNA]</scope>
    <source>
        <strain>ATCC BAA-1232 / LMG 22953 / PM1</strain>
    </source>
</reference>
<name>DAPA_METPP</name>
<proteinExistence type="inferred from homology"/>
<evidence type="ECO:0000255" key="1">
    <source>
        <dbReference type="HAMAP-Rule" id="MF_00418"/>
    </source>
</evidence>
<evidence type="ECO:0000305" key="2"/>
<organism>
    <name type="scientific">Methylibium petroleiphilum (strain ATCC BAA-1232 / LMG 22953 / PM1)</name>
    <dbReference type="NCBI Taxonomy" id="420662"/>
    <lineage>
        <taxon>Bacteria</taxon>
        <taxon>Pseudomonadati</taxon>
        <taxon>Pseudomonadota</taxon>
        <taxon>Betaproteobacteria</taxon>
        <taxon>Burkholderiales</taxon>
        <taxon>Sphaerotilaceae</taxon>
        <taxon>Methylibium</taxon>
    </lineage>
</organism>